<dbReference type="EMBL" id="AL123456">
    <property type="protein sequence ID" value="CCP45823.1"/>
    <property type="molecule type" value="Genomic_DNA"/>
</dbReference>
<dbReference type="PIR" id="D70857">
    <property type="entry name" value="D70857"/>
</dbReference>
<dbReference type="RefSeq" id="NP_217533.1">
    <property type="nucleotide sequence ID" value="NC_000962.3"/>
</dbReference>
<dbReference type="RefSeq" id="WP_003415272.1">
    <property type="nucleotide sequence ID" value="NZ_NVQJ01000041.1"/>
</dbReference>
<dbReference type="SMR" id="P9WNJ1"/>
<dbReference type="STRING" id="83332.Rv3017c"/>
<dbReference type="PaxDb" id="83332-Rv3017c"/>
<dbReference type="DNASU" id="888508"/>
<dbReference type="GeneID" id="45427007"/>
<dbReference type="GeneID" id="888508"/>
<dbReference type="KEGG" id="mtu:Rv3017c"/>
<dbReference type="KEGG" id="mtv:RVBD_3017c"/>
<dbReference type="PATRIC" id="fig|83332.111.peg.3361"/>
<dbReference type="TubercuList" id="Rv3017c"/>
<dbReference type="eggNOG" id="COG4842">
    <property type="taxonomic scope" value="Bacteria"/>
</dbReference>
<dbReference type="InParanoid" id="P9WNJ1"/>
<dbReference type="PhylomeDB" id="P9WNJ1"/>
<dbReference type="Proteomes" id="UP000001584">
    <property type="component" value="Chromosome"/>
</dbReference>
<dbReference type="GO" id="GO:0005576">
    <property type="term" value="C:extracellular region"/>
    <property type="evidence" value="ECO:0007669"/>
    <property type="project" value="UniProtKB-SubCell"/>
</dbReference>
<dbReference type="Gene3D" id="1.10.287.1060">
    <property type="entry name" value="ESAT-6-like"/>
    <property type="match status" value="1"/>
</dbReference>
<dbReference type="InterPro" id="IPR036689">
    <property type="entry name" value="ESAT-6-like_sf"/>
</dbReference>
<dbReference type="SUPFAM" id="SSF140453">
    <property type="entry name" value="EsxAB dimer-like"/>
    <property type="match status" value="1"/>
</dbReference>
<reference key="1">
    <citation type="journal article" date="1998" name="Nature">
        <title>Deciphering the biology of Mycobacterium tuberculosis from the complete genome sequence.</title>
        <authorList>
            <person name="Cole S.T."/>
            <person name="Brosch R."/>
            <person name="Parkhill J."/>
            <person name="Garnier T."/>
            <person name="Churcher C.M."/>
            <person name="Harris D.E."/>
            <person name="Gordon S.V."/>
            <person name="Eiglmeier K."/>
            <person name="Gas S."/>
            <person name="Barry C.E. III"/>
            <person name="Tekaia F."/>
            <person name="Badcock K."/>
            <person name="Basham D."/>
            <person name="Brown D."/>
            <person name="Chillingworth T."/>
            <person name="Connor R."/>
            <person name="Davies R.M."/>
            <person name="Devlin K."/>
            <person name="Feltwell T."/>
            <person name="Gentles S."/>
            <person name="Hamlin N."/>
            <person name="Holroyd S."/>
            <person name="Hornsby T."/>
            <person name="Jagels K."/>
            <person name="Krogh A."/>
            <person name="McLean J."/>
            <person name="Moule S."/>
            <person name="Murphy L.D."/>
            <person name="Oliver S."/>
            <person name="Osborne J."/>
            <person name="Quail M.A."/>
            <person name="Rajandream M.A."/>
            <person name="Rogers J."/>
            <person name="Rutter S."/>
            <person name="Seeger K."/>
            <person name="Skelton S."/>
            <person name="Squares S."/>
            <person name="Squares R."/>
            <person name="Sulston J.E."/>
            <person name="Taylor K."/>
            <person name="Whitehead S."/>
            <person name="Barrell B.G."/>
        </authorList>
    </citation>
    <scope>NUCLEOTIDE SEQUENCE [LARGE SCALE GENOMIC DNA]</scope>
    <source>
        <strain>ATCC 25618 / H37Rv</strain>
    </source>
</reference>
<reference key="2">
    <citation type="journal article" date="2009" name="PLoS Pathog.">
        <title>Systematic genetic nomenclature for type VII secretion systems.</title>
        <authorList>
            <person name="Bitter W."/>
            <person name="Houben E.N."/>
            <person name="Bottai D."/>
            <person name="Brodin P."/>
            <person name="Brown E.J."/>
            <person name="Cox J.S."/>
            <person name="Derbyshire K."/>
            <person name="Fortune S.M."/>
            <person name="Gao L.Y."/>
            <person name="Liu J."/>
            <person name="Gey van Pittius N.C."/>
            <person name="Pym A.S."/>
            <person name="Rubin E.J."/>
            <person name="Sherman D.R."/>
            <person name="Cole S.T."/>
            <person name="Brosch R."/>
        </authorList>
    </citation>
    <scope>NOMENCLATURE</scope>
</reference>
<gene>
    <name evidence="1" type="primary">esxQ</name>
    <name type="ordered locus">Rv3017c</name>
    <name type="ORF">MTV012.31c</name>
</gene>
<accession>P9WNJ1</accession>
<accession>L0TE29</accession>
<accession>O53264</accession>
<accession>P64091</accession>
<protein>
    <recommendedName>
        <fullName evidence="2">ESAT-6-like protein EsxQ</fullName>
    </recommendedName>
</protein>
<keyword id="KW-1185">Reference proteome</keyword>
<keyword id="KW-0964">Secreted</keyword>
<proteinExistence type="inferred from homology"/>
<organism>
    <name type="scientific">Mycobacterium tuberculosis (strain ATCC 25618 / H37Rv)</name>
    <dbReference type="NCBI Taxonomy" id="83332"/>
    <lineage>
        <taxon>Bacteria</taxon>
        <taxon>Bacillati</taxon>
        <taxon>Actinomycetota</taxon>
        <taxon>Actinomycetes</taxon>
        <taxon>Mycobacteriales</taxon>
        <taxon>Mycobacteriaceae</taxon>
        <taxon>Mycobacterium</taxon>
        <taxon>Mycobacterium tuberculosis complex</taxon>
    </lineage>
</organism>
<sequence>MSQSMYSYPAMTANVGDMAGYTGTTQSLGADIASERTAPSRACQGDLGMSHQDWQAQWNQAMEALARAYRRCRRALRQIGVLERPVGDSSDCGTIRVGSFRGRWLDPRHAGPATAADAGD</sequence>
<feature type="chain" id="PRO_0000167810" description="ESAT-6-like protein EsxQ">
    <location>
        <begin position="1"/>
        <end position="120"/>
    </location>
</feature>
<evidence type="ECO:0000303" key="1">
    <source>
    </source>
</evidence>
<evidence type="ECO:0000305" key="2"/>
<evidence type="ECO:0000305" key="3">
    <source>
    </source>
</evidence>
<name>ESXQ_MYCTU</name>
<comment type="subcellular location">
    <subcellularLocation>
        <location evidence="3">Secreted</location>
    </subcellularLocation>
    <text evidence="3">Probably secreted via the ESX-3 / type VII secretion system (T7SS).</text>
</comment>
<comment type="similarity">
    <text evidence="3">Belongs to the WXG100 family. ESAT-6 subfamily.</text>
</comment>